<reference key="1">
    <citation type="journal article" date="1993" name="J. Biol. Chem.">
        <title>The helix-loop-helix proteins (salivary-specific cAMP response element-binding proteins) can modulate cAMP-inducible RP4 gene expression in salivary cells.</title>
        <authorList>
            <person name="Lin H.H."/>
            <person name="Li W.-Y."/>
            <person name="Ann D.K."/>
        </authorList>
    </citation>
    <scope>NUCLEOTIDE SEQUENCE [MRNA]</scope>
    <source>
        <strain>Sprague-Dawley</strain>
        <tissue>Salivary gland</tissue>
    </source>
</reference>
<reference key="2">
    <citation type="journal article" date="1993" name="Genes Dev.">
        <title>Tissue-specific RNA splicing generates an ankyrin-like domain that affects the dimerization and DNA-binding properties of a bHLH protein.</title>
        <authorList>
            <person name="Klein E.S."/>
            <person name="Simmons D.M."/>
            <person name="Swanson L.W."/>
            <person name="Rosenfeld M.G."/>
        </authorList>
    </citation>
    <scope>NUCLEOTIDE SEQUENCE [GENOMIC DNA / MRNA] OF 80-707</scope>
</reference>
<reference key="3">
    <citation type="journal article" date="2012" name="Nat. Commun.">
        <title>Quantitative maps of protein phosphorylation sites across 14 different rat organs and tissues.</title>
        <authorList>
            <person name="Lundby A."/>
            <person name="Secher A."/>
            <person name="Lage K."/>
            <person name="Nordsborg N.B."/>
            <person name="Dmytriyev A."/>
            <person name="Lundby C."/>
            <person name="Olsen J.V."/>
        </authorList>
    </citation>
    <scope>PHOSPHORYLATION [LARGE SCALE ANALYSIS] AT SER-67 AND SER-79</scope>
    <scope>IDENTIFICATION BY MASS SPECTROMETRY [LARGE SCALE ANALYSIS]</scope>
</reference>
<feature type="chain" id="PRO_0000127232" description="Transcription factor 12">
    <location>
        <begin position="1"/>
        <end position="707"/>
    </location>
</feature>
<feature type="domain" description="bHLH" evidence="3">
    <location>
        <begin position="602"/>
        <end position="655"/>
    </location>
</feature>
<feature type="region of interest" description="Disordered" evidence="4">
    <location>
        <begin position="25"/>
        <end position="109"/>
    </location>
</feature>
<feature type="region of interest" description="Leucine-zipper">
    <location>
        <begin position="119"/>
        <end position="140"/>
    </location>
</feature>
<feature type="region of interest" description="Disordered" evidence="4">
    <location>
        <begin position="140"/>
        <end position="222"/>
    </location>
</feature>
<feature type="region of interest" description="Disordered" evidence="4">
    <location>
        <begin position="249"/>
        <end position="313"/>
    </location>
</feature>
<feature type="region of interest" description="Disordered" evidence="4">
    <location>
        <begin position="349"/>
        <end position="393"/>
    </location>
</feature>
<feature type="region of interest" description="Disordered" evidence="4">
    <location>
        <begin position="521"/>
        <end position="605"/>
    </location>
</feature>
<feature type="region of interest" description="Class A specific domain">
    <location>
        <begin position="657"/>
        <end position="680"/>
    </location>
</feature>
<feature type="region of interest" description="Disordered" evidence="4">
    <location>
        <begin position="675"/>
        <end position="707"/>
    </location>
</feature>
<feature type="compositionally biased region" description="Polar residues" evidence="4">
    <location>
        <begin position="30"/>
        <end position="48"/>
    </location>
</feature>
<feature type="compositionally biased region" description="Polar residues" evidence="4">
    <location>
        <begin position="56"/>
        <end position="76"/>
    </location>
</feature>
<feature type="compositionally biased region" description="Basic and acidic residues" evidence="4">
    <location>
        <begin position="81"/>
        <end position="93"/>
    </location>
</feature>
<feature type="compositionally biased region" description="Polar residues" evidence="4">
    <location>
        <begin position="144"/>
        <end position="163"/>
    </location>
</feature>
<feature type="compositionally biased region" description="Low complexity" evidence="4">
    <location>
        <begin position="256"/>
        <end position="269"/>
    </location>
</feature>
<feature type="compositionally biased region" description="Polar residues" evidence="4">
    <location>
        <begin position="282"/>
        <end position="306"/>
    </location>
</feature>
<feature type="compositionally biased region" description="Low complexity" evidence="4">
    <location>
        <begin position="352"/>
        <end position="363"/>
    </location>
</feature>
<feature type="compositionally biased region" description="Polar residues" evidence="4">
    <location>
        <begin position="364"/>
        <end position="377"/>
    </location>
</feature>
<feature type="compositionally biased region" description="Polar residues" evidence="4">
    <location>
        <begin position="384"/>
        <end position="393"/>
    </location>
</feature>
<feature type="compositionally biased region" description="Basic and acidic residues" evidence="4">
    <location>
        <begin position="543"/>
        <end position="555"/>
    </location>
</feature>
<feature type="compositionally biased region" description="Basic and acidic residues" evidence="4">
    <location>
        <begin position="561"/>
        <end position="576"/>
    </location>
</feature>
<feature type="compositionally biased region" description="Basic and acidic residues" evidence="4">
    <location>
        <begin position="593"/>
        <end position="605"/>
    </location>
</feature>
<feature type="compositionally biased region" description="Low complexity" evidence="4">
    <location>
        <begin position="686"/>
        <end position="697"/>
    </location>
</feature>
<feature type="compositionally biased region" description="Polar residues" evidence="4">
    <location>
        <begin position="698"/>
        <end position="707"/>
    </location>
</feature>
<feature type="modified residue" description="Phosphoserine" evidence="2">
    <location>
        <position position="47"/>
    </location>
</feature>
<feature type="modified residue" description="Phosphoserine" evidence="6">
    <location>
        <position position="67"/>
    </location>
</feature>
<feature type="modified residue" description="Phosphoserine" evidence="6">
    <location>
        <position position="79"/>
    </location>
</feature>
<feature type="modified residue" description="Phosphoserine" evidence="2">
    <location>
        <position position="98"/>
    </location>
</feature>
<feature type="modified residue" description="Phosphoserine" evidence="2">
    <location>
        <position position="116"/>
    </location>
</feature>
<feature type="modified residue" description="Phosphoserine" evidence="1">
    <location>
        <position position="124"/>
    </location>
</feature>
<feature type="modified residue" description="Phosphothreonine" evidence="2">
    <location>
        <position position="313"/>
    </location>
</feature>
<feature type="modified residue" description="Phosphoserine" evidence="2">
    <location>
        <position position="333"/>
    </location>
</feature>
<feature type="modified residue" description="Phosphoserine" evidence="2">
    <location>
        <position position="565"/>
    </location>
</feature>
<feature type="modified residue" description="Phosphothreonine" evidence="2">
    <location>
        <position position="582"/>
    </location>
</feature>
<feature type="modified residue" description="Phosphoserine" evidence="2">
    <location>
        <position position="583"/>
    </location>
</feature>
<feature type="modified residue" description="Phosphoserine" evidence="2">
    <location>
        <position position="584"/>
    </location>
</feature>
<feature type="cross-link" description="Glycyl lysine isopeptide (Lys-Gly) (interchain with G-Cter in SUMO2)" evidence="2">
    <location>
        <position position="110"/>
    </location>
</feature>
<feature type="cross-link" description="Glycyl lysine isopeptide (Lys-Gly) (interchain with G-Cter in SUMO2)" evidence="2">
    <location>
        <position position="181"/>
    </location>
</feature>
<feature type="cross-link" description="Glycyl lysine isopeptide (Lys-Gly) (interchain with G-Cter in SUMO2)" evidence="2">
    <location>
        <position position="544"/>
    </location>
</feature>
<feature type="cross-link" description="Glycyl lysine isopeptide (Lys-Gly) (interchain with G-Cter in SUMO2)" evidence="2">
    <location>
        <position position="575"/>
    </location>
</feature>
<feature type="cross-link" description="Glycyl lysine isopeptide (Lys-Gly) (interchain with G-Cter in SUMO2)" evidence="2">
    <location>
        <position position="634"/>
    </location>
</feature>
<feature type="cross-link" description="Glycyl lysine isopeptide (Lys-Gly) (interchain with G-Cter in SUMO2)" evidence="2">
    <location>
        <position position="678"/>
    </location>
</feature>
<feature type="splice variant" id="VSP_002106" description="In isoform Gamma." evidence="5">
    <location>
        <begin position="398"/>
        <end position="422"/>
    </location>
</feature>
<feature type="splice variant" id="VSP_002107" description="In isoform Beta." evidence="5">
    <location>
        <position position="422"/>
    </location>
</feature>
<feature type="sequence conflict" description="In Ref. 2; AAB25128/AAB25129." evidence="5" ref="2">
    <original>P</original>
    <variation>A</variation>
    <location>
        <position position="80"/>
    </location>
</feature>
<feature type="sequence conflict" description="In Ref. 2; AAB25128/AAB25129." evidence="5" ref="2">
    <original>S</original>
    <variation>C</variation>
    <location>
        <position position="124"/>
    </location>
</feature>
<feature type="sequence conflict" description="In Ref. 2; AAB25128/AAB25129." evidence="5" ref="2">
    <original>F</original>
    <variation>S</variation>
    <location>
        <position position="159"/>
    </location>
</feature>
<feature type="sequence conflict" description="In Ref. 2; AAB25128/AAB25129." evidence="5" ref="2">
    <original>T</original>
    <variation>N</variation>
    <location>
        <position position="541"/>
    </location>
</feature>
<keyword id="KW-0025">Alternative splicing</keyword>
<keyword id="KW-0217">Developmental protein</keyword>
<keyword id="KW-0238">DNA-binding</keyword>
<keyword id="KW-1017">Isopeptide bond</keyword>
<keyword id="KW-0539">Nucleus</keyword>
<keyword id="KW-0597">Phosphoprotein</keyword>
<keyword id="KW-1185">Reference proteome</keyword>
<keyword id="KW-0804">Transcription</keyword>
<keyword id="KW-0805">Transcription regulation</keyword>
<keyword id="KW-0832">Ubl conjugation</keyword>
<gene>
    <name type="primary">Tcf12</name>
</gene>
<comment type="function">
    <text evidence="1 2">Transcriptional regulator. Involved in the initiation of neuronal differentiation. Activates transcription by binding to the E box (5'-CANNTG-3') (By similarity). May be involved in the functional network that regulates the development of the GnRH axis.</text>
</comment>
<comment type="subunit">
    <text evidence="1 2">Efficient DNA binding requires dimerization with another bHLH protein. Forms homo- or heterooligomers with myogenin, E12 and ITF2 proteins. Interacts with PTF1. Interacts with RUNX1T1. Interacts with NEUROD2 (By similarity). Interacts with BHLHA9.</text>
</comment>
<comment type="subcellular location">
    <subcellularLocation>
        <location>Nucleus</location>
    </subcellularLocation>
</comment>
<comment type="alternative products">
    <event type="alternative splicing"/>
    <isoform>
        <id>P51514-1</id>
        <name>Alpha</name>
        <name>Beta</name>
        <sequence type="displayed"/>
    </isoform>
    <isoform>
        <id>P51514-2</id>
        <name>Beta</name>
        <sequence type="described" ref="VSP_002107"/>
    </isoform>
    <isoform>
        <id>P51514-3</id>
        <name>Gamma</name>
        <name>Alpha</name>
        <sequence type="described" ref="VSP_002106"/>
    </isoform>
    <text>Additional isoforms seem to exist.</text>
</comment>
<comment type="tissue specificity">
    <text>Isoform gamma is highly expressed in lung, kidney, spleen, and is expressed at reduced levels in heart, muscle, liver, pituitary, brain and the trigeminal ganglion. The expression of isoform alpha predominates over isoform gamma in the pituitary and the brain.</text>
</comment>
<dbReference type="EMBL" id="L09656">
    <property type="protein sequence ID" value="AAA42115.1"/>
    <property type="molecule type" value="mRNA"/>
</dbReference>
<dbReference type="EMBL" id="S53913">
    <property type="protein sequence ID" value="AAB25128.2"/>
    <property type="molecule type" value="mRNA"/>
</dbReference>
<dbReference type="EMBL" id="S53920">
    <property type="protein sequence ID" value="AAB25129.2"/>
    <property type="status" value="ALT_SEQ"/>
    <property type="molecule type" value="mRNA"/>
</dbReference>
<dbReference type="EMBL" id="S53922">
    <property type="status" value="NOT_ANNOTATED_CDS"/>
    <property type="molecule type" value="Genomic_DNA"/>
</dbReference>
<dbReference type="EMBL" id="S53921">
    <property type="status" value="NOT_ANNOTATED_CDS"/>
    <property type="molecule type" value="Genomic_DNA"/>
</dbReference>
<dbReference type="PIR" id="A46691">
    <property type="entry name" value="A46691"/>
</dbReference>
<dbReference type="RefSeq" id="NP_037308.1">
    <molecule id="P51514-1"/>
    <property type="nucleotide sequence ID" value="NM_013176.2"/>
</dbReference>
<dbReference type="RefSeq" id="XP_006243408.1">
    <molecule id="P51514-2"/>
    <property type="nucleotide sequence ID" value="XM_006243346.4"/>
</dbReference>
<dbReference type="RefSeq" id="XP_006243411.1">
    <molecule id="P51514-3"/>
    <property type="nucleotide sequence ID" value="XM_006243349.4"/>
</dbReference>
<dbReference type="BMRB" id="P51514"/>
<dbReference type="CORUM" id="P51514"/>
<dbReference type="FunCoup" id="P51514">
    <property type="interactions" value="3864"/>
</dbReference>
<dbReference type="STRING" id="10116.ENSRNOP00000074384"/>
<dbReference type="iPTMnet" id="P51514"/>
<dbReference type="PhosphoSitePlus" id="P51514"/>
<dbReference type="jPOST" id="P51514"/>
<dbReference type="PaxDb" id="10116-ENSRNOP00000023634"/>
<dbReference type="Ensembl" id="ENSRNOT00000081185.2">
    <molecule id="P51514-1"/>
    <property type="protein sequence ID" value="ENSRNOP00000074384.1"/>
    <property type="gene ID" value="ENSRNOG00000057754.2"/>
</dbReference>
<dbReference type="GeneID" id="25720"/>
<dbReference type="KEGG" id="rno:25720"/>
<dbReference type="UCSC" id="RGD:3829">
    <molecule id="P51514-1"/>
    <property type="organism name" value="rat"/>
</dbReference>
<dbReference type="AGR" id="RGD:3829"/>
<dbReference type="CTD" id="6938"/>
<dbReference type="RGD" id="3829">
    <property type="gene designation" value="Tcf12"/>
</dbReference>
<dbReference type="eggNOG" id="KOG3910">
    <property type="taxonomic scope" value="Eukaryota"/>
</dbReference>
<dbReference type="GeneTree" id="ENSGT00940000155047"/>
<dbReference type="HOGENOM" id="CLU_021099_2_0_1"/>
<dbReference type="InParanoid" id="P51514"/>
<dbReference type="OMA" id="SSRGRTX"/>
<dbReference type="OrthoDB" id="66764at9989"/>
<dbReference type="PhylomeDB" id="P51514"/>
<dbReference type="Reactome" id="R-RNO-525793">
    <property type="pathway name" value="Myogenesis"/>
</dbReference>
<dbReference type="Reactome" id="R-RNO-8939236">
    <property type="pathway name" value="RUNX1 regulates transcription of genes involved in differentiation of HSCs"/>
</dbReference>
<dbReference type="PRO" id="PR:P51514"/>
<dbReference type="Proteomes" id="UP000002494">
    <property type="component" value="Chromosome 8"/>
</dbReference>
<dbReference type="Bgee" id="ENSRNOG00000057754">
    <property type="expression patterns" value="Expressed in thymus and 19 other cell types or tissues"/>
</dbReference>
<dbReference type="ExpressionAtlas" id="P51514">
    <property type="expression patterns" value="baseline and differential"/>
</dbReference>
<dbReference type="GO" id="GO:0000785">
    <property type="term" value="C:chromatin"/>
    <property type="evidence" value="ECO:0000266"/>
    <property type="project" value="RGD"/>
</dbReference>
<dbReference type="GO" id="GO:0005737">
    <property type="term" value="C:cytoplasm"/>
    <property type="evidence" value="ECO:0000266"/>
    <property type="project" value="RGD"/>
</dbReference>
<dbReference type="GO" id="GO:0016607">
    <property type="term" value="C:nuclear speck"/>
    <property type="evidence" value="ECO:0007669"/>
    <property type="project" value="Ensembl"/>
</dbReference>
<dbReference type="GO" id="GO:0005654">
    <property type="term" value="C:nucleoplasm"/>
    <property type="evidence" value="ECO:0000304"/>
    <property type="project" value="Reactome"/>
</dbReference>
<dbReference type="GO" id="GO:0005634">
    <property type="term" value="C:nucleus"/>
    <property type="evidence" value="ECO:0000314"/>
    <property type="project" value="MGI"/>
</dbReference>
<dbReference type="GO" id="GO:0090575">
    <property type="term" value="C:RNA polymerase II transcription regulator complex"/>
    <property type="evidence" value="ECO:0000266"/>
    <property type="project" value="RGD"/>
</dbReference>
<dbReference type="GO" id="GO:0005667">
    <property type="term" value="C:transcription regulator complex"/>
    <property type="evidence" value="ECO:0000266"/>
    <property type="project" value="RGD"/>
</dbReference>
<dbReference type="GO" id="GO:0043425">
    <property type="term" value="F:bHLH transcription factor binding"/>
    <property type="evidence" value="ECO:0000266"/>
    <property type="project" value="RGD"/>
</dbReference>
<dbReference type="GO" id="GO:0035497">
    <property type="term" value="F:cAMP response element binding"/>
    <property type="evidence" value="ECO:0000314"/>
    <property type="project" value="RGD"/>
</dbReference>
<dbReference type="GO" id="GO:0003677">
    <property type="term" value="F:DNA binding"/>
    <property type="evidence" value="ECO:0000266"/>
    <property type="project" value="RGD"/>
</dbReference>
<dbReference type="GO" id="GO:0001228">
    <property type="term" value="F:DNA-binding transcription activator activity, RNA polymerase II-specific"/>
    <property type="evidence" value="ECO:0000266"/>
    <property type="project" value="RGD"/>
</dbReference>
<dbReference type="GO" id="GO:0003700">
    <property type="term" value="F:DNA-binding transcription factor activity"/>
    <property type="evidence" value="ECO:0000266"/>
    <property type="project" value="RGD"/>
</dbReference>
<dbReference type="GO" id="GO:0000981">
    <property type="term" value="F:DNA-binding transcription factor activity, RNA polymerase II-specific"/>
    <property type="evidence" value="ECO:0000318"/>
    <property type="project" value="GO_Central"/>
</dbReference>
<dbReference type="GO" id="GO:0140297">
    <property type="term" value="F:DNA-binding transcription factor binding"/>
    <property type="evidence" value="ECO:0000266"/>
    <property type="project" value="RGD"/>
</dbReference>
<dbReference type="GO" id="GO:0070888">
    <property type="term" value="F:E-box binding"/>
    <property type="evidence" value="ECO:0000250"/>
    <property type="project" value="UniProtKB"/>
</dbReference>
<dbReference type="GO" id="GO:0071837">
    <property type="term" value="F:HMG box domain binding"/>
    <property type="evidence" value="ECO:0000353"/>
    <property type="project" value="UniProtKB"/>
</dbReference>
<dbReference type="GO" id="GO:0046982">
    <property type="term" value="F:protein heterodimerization activity"/>
    <property type="evidence" value="ECO:0000250"/>
    <property type="project" value="UniProtKB"/>
</dbReference>
<dbReference type="GO" id="GO:0000978">
    <property type="term" value="F:RNA polymerase II cis-regulatory region sequence-specific DNA binding"/>
    <property type="evidence" value="ECO:0000266"/>
    <property type="project" value="RGD"/>
</dbReference>
<dbReference type="GO" id="GO:1990837">
    <property type="term" value="F:sequence-specific double-stranded DNA binding"/>
    <property type="evidence" value="ECO:0000266"/>
    <property type="project" value="RGD"/>
</dbReference>
<dbReference type="GO" id="GO:0046332">
    <property type="term" value="F:SMAD binding"/>
    <property type="evidence" value="ECO:0000266"/>
    <property type="project" value="RGD"/>
</dbReference>
<dbReference type="GO" id="GO:0010467">
    <property type="term" value="P:gene expression"/>
    <property type="evidence" value="ECO:0000266"/>
    <property type="project" value="RGD"/>
</dbReference>
<dbReference type="GO" id="GO:0045893">
    <property type="term" value="P:positive regulation of DNA-templated transcription"/>
    <property type="evidence" value="ECO:0000266"/>
    <property type="project" value="RGD"/>
</dbReference>
<dbReference type="GO" id="GO:0010628">
    <property type="term" value="P:positive regulation of gene expression"/>
    <property type="evidence" value="ECO:0000266"/>
    <property type="project" value="RGD"/>
</dbReference>
<dbReference type="GO" id="GO:0045666">
    <property type="term" value="P:positive regulation of neuron differentiation"/>
    <property type="evidence" value="ECO:0000250"/>
    <property type="project" value="UniProtKB"/>
</dbReference>
<dbReference type="GO" id="GO:0045944">
    <property type="term" value="P:positive regulation of transcription by RNA polymerase II"/>
    <property type="evidence" value="ECO:0000314"/>
    <property type="project" value="RGD"/>
</dbReference>
<dbReference type="GO" id="GO:0006357">
    <property type="term" value="P:regulation of transcription by RNA polymerase II"/>
    <property type="evidence" value="ECO:0000318"/>
    <property type="project" value="GO_Central"/>
</dbReference>
<dbReference type="GO" id="GO:0097210">
    <property type="term" value="P:response to gonadotropin-releasing hormone"/>
    <property type="evidence" value="ECO:0000250"/>
    <property type="project" value="UniProtKB"/>
</dbReference>
<dbReference type="CDD" id="cd18945">
    <property type="entry name" value="bHLH_E-protein_TCF4_E2-2"/>
    <property type="match status" value="1"/>
</dbReference>
<dbReference type="FunFam" id="4.10.280.10:FF:000001">
    <property type="entry name" value="Putative transcription factor 12"/>
    <property type="match status" value="1"/>
</dbReference>
<dbReference type="Gene3D" id="4.10.280.10">
    <property type="entry name" value="Helix-loop-helix DNA-binding domain"/>
    <property type="match status" value="1"/>
</dbReference>
<dbReference type="InterPro" id="IPR011598">
    <property type="entry name" value="bHLH_dom"/>
</dbReference>
<dbReference type="InterPro" id="IPR036638">
    <property type="entry name" value="HLH_DNA-bd_sf"/>
</dbReference>
<dbReference type="InterPro" id="IPR051098">
    <property type="entry name" value="NeuroDiff_E-box_TFs"/>
</dbReference>
<dbReference type="PANTHER" id="PTHR11793">
    <property type="entry name" value="BASIC HELIX-LOOP-HELIX TRANSCRIPTION FACTOR"/>
    <property type="match status" value="1"/>
</dbReference>
<dbReference type="PANTHER" id="PTHR11793:SF11">
    <property type="entry name" value="TRANSCRIPTION FACTOR 12"/>
    <property type="match status" value="1"/>
</dbReference>
<dbReference type="Pfam" id="PF00010">
    <property type="entry name" value="HLH"/>
    <property type="match status" value="1"/>
</dbReference>
<dbReference type="SMART" id="SM00353">
    <property type="entry name" value="HLH"/>
    <property type="match status" value="1"/>
</dbReference>
<dbReference type="SUPFAM" id="SSF47459">
    <property type="entry name" value="HLH, helix-loop-helix DNA-binding domain"/>
    <property type="match status" value="1"/>
</dbReference>
<dbReference type="PROSITE" id="PS50888">
    <property type="entry name" value="BHLH"/>
    <property type="match status" value="1"/>
</dbReference>
<sequence>MNPQQQRMAAIGTDKELSDLLDFSAMFSPPVNSGKTRPTTLGSSQFSGSGMDERGGTTSWGTSGQPSPSYDSSRGFTDSPHYSDHLNDSRLGTHEGLSPTPFMNSNLIGKTSERGSFSLYSRDSGLSGCQSSLLRQDLGLGSPAQLSSSGKPGTPYYSFSATSSRRRPLHDSVALDPLQAKKVRKVPPGLPSSVYAPSPNSDDFNRESPSYPSPKPPTSMFASTFFMQDGTHSSSDLWSSSNGMSQPGFGGILGTSTSHMSQSSSYGSLHSHDRLSYPPHSVSPTDINTSLPPMSSFHRGSTSSSPYVAASHTPPINGSDSILGTRGNAAGSSQTGDALGKALASIYSPDHTSSSFPSNPSTPVGSPSPLTAGTSQWPRAGGQAPSSPSYENSLHSLKNRVEQQLHEHLQDAMSFLKDVCEQSRMEDRLDRLDDAIHVLRNHAVGPSTSLPTSHSDIHSLLGPSHNAPIGNLNSNYGGSSLVTNSRSASMVGTHREDSVSLNGNHSVLSSTVAASNTELNHKTPESFRGGVQNQSGSVVPTEIKTENKEKDENLHEPPSSDDMKSDDESSQKDIKVSSRGRTSSTNEDEDLNPEQKIEREKERRMANNARERLRVRDINEAFKELGRMCQLHLKSEKPQTKLLILHQAVAVILSLEQQVRERNLNPKAACLKRREEEKVSAASAEPPTTLPGTHPGLSETTNPMGHL</sequence>
<name>HTF4_RAT</name>
<evidence type="ECO:0000250" key="1">
    <source>
        <dbReference type="UniProtKB" id="Q61286"/>
    </source>
</evidence>
<evidence type="ECO:0000250" key="2">
    <source>
        <dbReference type="UniProtKB" id="Q99081"/>
    </source>
</evidence>
<evidence type="ECO:0000255" key="3">
    <source>
        <dbReference type="PROSITE-ProRule" id="PRU00981"/>
    </source>
</evidence>
<evidence type="ECO:0000256" key="4">
    <source>
        <dbReference type="SAM" id="MobiDB-lite"/>
    </source>
</evidence>
<evidence type="ECO:0000305" key="5"/>
<evidence type="ECO:0007744" key="6">
    <source>
    </source>
</evidence>
<organism>
    <name type="scientific">Rattus norvegicus</name>
    <name type="common">Rat</name>
    <dbReference type="NCBI Taxonomy" id="10116"/>
    <lineage>
        <taxon>Eukaryota</taxon>
        <taxon>Metazoa</taxon>
        <taxon>Chordata</taxon>
        <taxon>Craniata</taxon>
        <taxon>Vertebrata</taxon>
        <taxon>Euteleostomi</taxon>
        <taxon>Mammalia</taxon>
        <taxon>Eutheria</taxon>
        <taxon>Euarchontoglires</taxon>
        <taxon>Glires</taxon>
        <taxon>Rodentia</taxon>
        <taxon>Myomorpha</taxon>
        <taxon>Muroidea</taxon>
        <taxon>Muridae</taxon>
        <taxon>Murinae</taxon>
        <taxon>Rattus</taxon>
    </lineage>
</organism>
<accession>P51514</accession>
<proteinExistence type="evidence at protein level"/>
<protein>
    <recommendedName>
        <fullName>Transcription factor 12</fullName>
        <shortName>TCF-12</shortName>
    </recommendedName>
    <alternativeName>
        <fullName>DNA-binding protein HTF4</fullName>
    </alternativeName>
    <alternativeName>
        <fullName>E-box-binding protein</fullName>
    </alternativeName>
    <alternativeName>
        <fullName>Salivary-specific cAMP response element-binding protein alpha</fullName>
        <shortName>SCBP-alpha</shortName>
    </alternativeName>
    <alternativeName>
        <fullName>Transcription factor HTF-4</fullName>
    </alternativeName>
</protein>